<reference key="1">
    <citation type="journal article" date="2008" name="DNA Res.">
        <title>Complete genome sequence and comparative analysis of the wild-type commensal Escherichia coli strain SE11 isolated from a healthy adult.</title>
        <authorList>
            <person name="Oshima K."/>
            <person name="Toh H."/>
            <person name="Ogura Y."/>
            <person name="Sasamoto H."/>
            <person name="Morita H."/>
            <person name="Park S.-H."/>
            <person name="Ooka T."/>
            <person name="Iyoda S."/>
            <person name="Taylor T.D."/>
            <person name="Hayashi T."/>
            <person name="Itoh K."/>
            <person name="Hattori M."/>
        </authorList>
    </citation>
    <scope>NUCLEOTIDE SEQUENCE [LARGE SCALE GENOMIC DNA]</scope>
    <source>
        <strain>SE11</strain>
    </source>
</reference>
<comment type="function">
    <text evidence="1">Master enzyme that delivers sulfur to a number of partners involved in Fe-S cluster assembly, tRNA modification or cofactor biosynthesis. Catalyzes the removal of elemental sulfur and selenium atoms from cysteine and selenocysteine to produce alanine. Functions as a sulfur delivery protein for Fe-S cluster synthesis onto IscU, an Fe-S scaffold assembly protein, as well as other S acceptor proteins. Also functions as a selenium delivery protein in the pathway for the biosynthesis of selenophosphate.</text>
</comment>
<comment type="catalytic activity">
    <reaction evidence="1">
        <text>(sulfur carrier)-H + L-cysteine = (sulfur carrier)-SH + L-alanine</text>
        <dbReference type="Rhea" id="RHEA:43892"/>
        <dbReference type="Rhea" id="RHEA-COMP:14737"/>
        <dbReference type="Rhea" id="RHEA-COMP:14739"/>
        <dbReference type="ChEBI" id="CHEBI:29917"/>
        <dbReference type="ChEBI" id="CHEBI:35235"/>
        <dbReference type="ChEBI" id="CHEBI:57972"/>
        <dbReference type="ChEBI" id="CHEBI:64428"/>
        <dbReference type="EC" id="2.8.1.7"/>
    </reaction>
</comment>
<comment type="cofactor">
    <cofactor evidence="1">
        <name>pyridoxal 5'-phosphate</name>
        <dbReference type="ChEBI" id="CHEBI:597326"/>
    </cofactor>
</comment>
<comment type="pathway">
    <text evidence="1">Cofactor biosynthesis; iron-sulfur cluster biosynthesis.</text>
</comment>
<comment type="subunit">
    <text evidence="1">Homodimer. Forms a heterotetramer with IscU, interacts with other sulfur acceptors.</text>
</comment>
<comment type="subcellular location">
    <subcellularLocation>
        <location evidence="1">Cytoplasm</location>
    </subcellularLocation>
</comment>
<comment type="similarity">
    <text evidence="1">Belongs to the class-V pyridoxal-phosphate-dependent aminotransferase family. NifS/IscS subfamily.</text>
</comment>
<keyword id="KW-0001">2Fe-2S</keyword>
<keyword id="KW-0963">Cytoplasm</keyword>
<keyword id="KW-0408">Iron</keyword>
<keyword id="KW-0411">Iron-sulfur</keyword>
<keyword id="KW-0479">Metal-binding</keyword>
<keyword id="KW-0663">Pyridoxal phosphate</keyword>
<keyword id="KW-0808">Transferase</keyword>
<accession>B6I5A2</accession>
<organism>
    <name type="scientific">Escherichia coli (strain SE11)</name>
    <dbReference type="NCBI Taxonomy" id="409438"/>
    <lineage>
        <taxon>Bacteria</taxon>
        <taxon>Pseudomonadati</taxon>
        <taxon>Pseudomonadota</taxon>
        <taxon>Gammaproteobacteria</taxon>
        <taxon>Enterobacterales</taxon>
        <taxon>Enterobacteriaceae</taxon>
        <taxon>Escherichia</taxon>
    </lineage>
</organism>
<evidence type="ECO:0000255" key="1">
    <source>
        <dbReference type="HAMAP-Rule" id="MF_00331"/>
    </source>
</evidence>
<dbReference type="EC" id="2.8.1.7" evidence="1"/>
<dbReference type="EMBL" id="AP009240">
    <property type="protein sequence ID" value="BAG78340.1"/>
    <property type="molecule type" value="Genomic_DNA"/>
</dbReference>
<dbReference type="RefSeq" id="WP_001295373.1">
    <property type="nucleotide sequence ID" value="NC_011415.1"/>
</dbReference>
<dbReference type="SMR" id="B6I5A2"/>
<dbReference type="GeneID" id="93774606"/>
<dbReference type="KEGG" id="ecy:ECSE_2816"/>
<dbReference type="HOGENOM" id="CLU_003433_0_2_6"/>
<dbReference type="UniPathway" id="UPA00266"/>
<dbReference type="Proteomes" id="UP000008199">
    <property type="component" value="Chromosome"/>
</dbReference>
<dbReference type="GO" id="GO:1990221">
    <property type="term" value="C:L-cysteine desulfurase complex"/>
    <property type="evidence" value="ECO:0007669"/>
    <property type="project" value="UniProtKB-ARBA"/>
</dbReference>
<dbReference type="GO" id="GO:0051537">
    <property type="term" value="F:2 iron, 2 sulfur cluster binding"/>
    <property type="evidence" value="ECO:0007669"/>
    <property type="project" value="UniProtKB-UniRule"/>
</dbReference>
<dbReference type="GO" id="GO:0031071">
    <property type="term" value="F:cysteine desulfurase activity"/>
    <property type="evidence" value="ECO:0007669"/>
    <property type="project" value="UniProtKB-UniRule"/>
</dbReference>
<dbReference type="GO" id="GO:0046872">
    <property type="term" value="F:metal ion binding"/>
    <property type="evidence" value="ECO:0007669"/>
    <property type="project" value="UniProtKB-KW"/>
</dbReference>
<dbReference type="GO" id="GO:0030170">
    <property type="term" value="F:pyridoxal phosphate binding"/>
    <property type="evidence" value="ECO:0007669"/>
    <property type="project" value="UniProtKB-UniRule"/>
</dbReference>
<dbReference type="GO" id="GO:0044571">
    <property type="term" value="P:[2Fe-2S] cluster assembly"/>
    <property type="evidence" value="ECO:0007669"/>
    <property type="project" value="UniProtKB-UniRule"/>
</dbReference>
<dbReference type="FunFam" id="3.40.640.10:FF:000003">
    <property type="entry name" value="Cysteine desulfurase IscS"/>
    <property type="match status" value="1"/>
</dbReference>
<dbReference type="FunFam" id="3.90.1150.10:FF:000002">
    <property type="entry name" value="Cysteine desulfurase IscS"/>
    <property type="match status" value="1"/>
</dbReference>
<dbReference type="Gene3D" id="3.90.1150.10">
    <property type="entry name" value="Aspartate Aminotransferase, domain 1"/>
    <property type="match status" value="1"/>
</dbReference>
<dbReference type="Gene3D" id="3.40.640.10">
    <property type="entry name" value="Type I PLP-dependent aspartate aminotransferase-like (Major domain)"/>
    <property type="match status" value="1"/>
</dbReference>
<dbReference type="HAMAP" id="MF_00331">
    <property type="entry name" value="Cys_desulf_IscS"/>
    <property type="match status" value="1"/>
</dbReference>
<dbReference type="InterPro" id="IPR000192">
    <property type="entry name" value="Aminotrans_V_dom"/>
</dbReference>
<dbReference type="InterPro" id="IPR020578">
    <property type="entry name" value="Aminotrans_V_PyrdxlP_BS"/>
</dbReference>
<dbReference type="InterPro" id="IPR010240">
    <property type="entry name" value="Cys_deSase_IscS"/>
</dbReference>
<dbReference type="InterPro" id="IPR016454">
    <property type="entry name" value="Cysteine_dSase"/>
</dbReference>
<dbReference type="InterPro" id="IPR015424">
    <property type="entry name" value="PyrdxlP-dep_Trfase"/>
</dbReference>
<dbReference type="InterPro" id="IPR015421">
    <property type="entry name" value="PyrdxlP-dep_Trfase_major"/>
</dbReference>
<dbReference type="InterPro" id="IPR015422">
    <property type="entry name" value="PyrdxlP-dep_Trfase_small"/>
</dbReference>
<dbReference type="NCBIfam" id="TIGR02006">
    <property type="entry name" value="IscS"/>
    <property type="match status" value="1"/>
</dbReference>
<dbReference type="NCBIfam" id="NF002806">
    <property type="entry name" value="PRK02948.1"/>
    <property type="match status" value="1"/>
</dbReference>
<dbReference type="NCBIfam" id="NF010611">
    <property type="entry name" value="PRK14012.1"/>
    <property type="match status" value="1"/>
</dbReference>
<dbReference type="PANTHER" id="PTHR11601:SF34">
    <property type="entry name" value="CYSTEINE DESULFURASE"/>
    <property type="match status" value="1"/>
</dbReference>
<dbReference type="PANTHER" id="PTHR11601">
    <property type="entry name" value="CYSTEINE DESULFURYLASE FAMILY MEMBER"/>
    <property type="match status" value="1"/>
</dbReference>
<dbReference type="Pfam" id="PF00266">
    <property type="entry name" value="Aminotran_5"/>
    <property type="match status" value="1"/>
</dbReference>
<dbReference type="PIRSF" id="PIRSF005572">
    <property type="entry name" value="NifS"/>
    <property type="match status" value="1"/>
</dbReference>
<dbReference type="SUPFAM" id="SSF53383">
    <property type="entry name" value="PLP-dependent transferases"/>
    <property type="match status" value="1"/>
</dbReference>
<dbReference type="PROSITE" id="PS00595">
    <property type="entry name" value="AA_TRANSFER_CLASS_5"/>
    <property type="match status" value="1"/>
</dbReference>
<proteinExistence type="inferred from homology"/>
<protein>
    <recommendedName>
        <fullName evidence="1">Cysteine desulfurase IscS</fullName>
        <ecNumber evidence="1">2.8.1.7</ecNumber>
    </recommendedName>
</protein>
<sequence>MKLPIYLDYSATTPVDPRVAEKMMQFMTMDGTFGNPASRSHRFGWQAEEAVDIARNQIADLVGADPREIVFTSGATESDNLAIKGAANFYQKKGKHIITSKTEHKAVLDTCRQLEREGFEVTYLAPQRNGIIDLKELEAAMRDDTILVSIMHVNNEIGVVQDIAAIGEMCRARGIIYHVDATQSVGKLPIDLSQLKVDLMSFSGHKIYGPKGIGALYVRRKPRVRIEAQMHGGGHERGMRSGTLPVHQIVGMGEAYRIAKEEMATEMERLRGLRNRLWNGIKDIEEVYLNGDLEHGAPNILNVSFNYVEGESLIMALKDLAVSSGSACTSASLEPSYVLRALGLNDELAHSSIRFSLGRFTTEEEIDYTIELVRKSIGRLRDLSPLWEMYKQGVDLNSIEWAHH</sequence>
<gene>
    <name evidence="1" type="primary">iscS</name>
    <name type="ordered locus">ECSE_2816</name>
</gene>
<name>ISCS_ECOSE</name>
<feature type="chain" id="PRO_1000119627" description="Cysteine desulfurase IscS">
    <location>
        <begin position="1"/>
        <end position="404"/>
    </location>
</feature>
<feature type="active site" description="Cysteine persulfide intermediate" evidence="1">
    <location>
        <position position="328"/>
    </location>
</feature>
<feature type="binding site" evidence="1">
    <location>
        <begin position="75"/>
        <end position="76"/>
    </location>
    <ligand>
        <name>pyridoxal 5'-phosphate</name>
        <dbReference type="ChEBI" id="CHEBI:597326"/>
    </ligand>
</feature>
<feature type="binding site" evidence="1">
    <location>
        <position position="155"/>
    </location>
    <ligand>
        <name>pyridoxal 5'-phosphate</name>
        <dbReference type="ChEBI" id="CHEBI:597326"/>
    </ligand>
</feature>
<feature type="binding site" evidence="1">
    <location>
        <position position="183"/>
    </location>
    <ligand>
        <name>pyridoxal 5'-phosphate</name>
        <dbReference type="ChEBI" id="CHEBI:597326"/>
    </ligand>
</feature>
<feature type="binding site" evidence="1">
    <location>
        <begin position="203"/>
        <end position="205"/>
    </location>
    <ligand>
        <name>pyridoxal 5'-phosphate</name>
        <dbReference type="ChEBI" id="CHEBI:597326"/>
    </ligand>
</feature>
<feature type="binding site" evidence="1">
    <location>
        <position position="243"/>
    </location>
    <ligand>
        <name>pyridoxal 5'-phosphate</name>
        <dbReference type="ChEBI" id="CHEBI:597326"/>
    </ligand>
</feature>
<feature type="binding site" description="via persulfide group" evidence="1">
    <location>
        <position position="328"/>
    </location>
    <ligand>
        <name>[2Fe-2S] cluster</name>
        <dbReference type="ChEBI" id="CHEBI:190135"/>
        <note>ligand shared with IscU</note>
    </ligand>
</feature>
<feature type="modified residue" description="N6-(pyridoxal phosphate)lysine" evidence="1">
    <location>
        <position position="206"/>
    </location>
</feature>